<gene>
    <name evidence="1" type="primary">purM</name>
    <name type="ordered locus">EC55989_2784</name>
</gene>
<keyword id="KW-0067">ATP-binding</keyword>
<keyword id="KW-0963">Cytoplasm</keyword>
<keyword id="KW-0436">Ligase</keyword>
<keyword id="KW-0547">Nucleotide-binding</keyword>
<keyword id="KW-0658">Purine biosynthesis</keyword>
<keyword id="KW-1185">Reference proteome</keyword>
<evidence type="ECO:0000255" key="1">
    <source>
        <dbReference type="HAMAP-Rule" id="MF_00741"/>
    </source>
</evidence>
<accession>B7LCN9</accession>
<proteinExistence type="inferred from homology"/>
<sequence length="345" mass="36873">MTDKTSLSYKDAGVDIDAGNALVGRIKGVVKKTRRPEVMGGLGGFGALCALPQKYREPVLVSGTDGVGTKLRLAMDLKRHDTIGIDLVAMCVNDLVVQGAEPLFFLDYYATGKLDVDTASAVISGIAEGCLQSGCSLVGGETAEMPGMYHGEDYDVAGFCVGVVEKSEIIDGSKVSDGDVLIALGSSGPHSNGYSLVRKILEVSGCDPQTTELDGKPLADHLLAPTRIYVKSVLELIEKVDVHAIAHLTGGGFWENIPRVLPDNTQAVIDESSWQWPEVFNWLQTAGNVERHEMYRTFNCGVGMIIALPAPEVDKALALLNANGENAWKIGIIKASDSEQRVVIE</sequence>
<reference key="1">
    <citation type="journal article" date="2009" name="PLoS Genet.">
        <title>Organised genome dynamics in the Escherichia coli species results in highly diverse adaptive paths.</title>
        <authorList>
            <person name="Touchon M."/>
            <person name="Hoede C."/>
            <person name="Tenaillon O."/>
            <person name="Barbe V."/>
            <person name="Baeriswyl S."/>
            <person name="Bidet P."/>
            <person name="Bingen E."/>
            <person name="Bonacorsi S."/>
            <person name="Bouchier C."/>
            <person name="Bouvet O."/>
            <person name="Calteau A."/>
            <person name="Chiapello H."/>
            <person name="Clermont O."/>
            <person name="Cruveiller S."/>
            <person name="Danchin A."/>
            <person name="Diard M."/>
            <person name="Dossat C."/>
            <person name="Karoui M.E."/>
            <person name="Frapy E."/>
            <person name="Garry L."/>
            <person name="Ghigo J.M."/>
            <person name="Gilles A.M."/>
            <person name="Johnson J."/>
            <person name="Le Bouguenec C."/>
            <person name="Lescat M."/>
            <person name="Mangenot S."/>
            <person name="Martinez-Jehanne V."/>
            <person name="Matic I."/>
            <person name="Nassif X."/>
            <person name="Oztas S."/>
            <person name="Petit M.A."/>
            <person name="Pichon C."/>
            <person name="Rouy Z."/>
            <person name="Ruf C.S."/>
            <person name="Schneider D."/>
            <person name="Tourret J."/>
            <person name="Vacherie B."/>
            <person name="Vallenet D."/>
            <person name="Medigue C."/>
            <person name="Rocha E.P.C."/>
            <person name="Denamur E."/>
        </authorList>
    </citation>
    <scope>NUCLEOTIDE SEQUENCE [LARGE SCALE GENOMIC DNA]</scope>
    <source>
        <strain>55989 / EAEC</strain>
    </source>
</reference>
<organism>
    <name type="scientific">Escherichia coli (strain 55989 / EAEC)</name>
    <dbReference type="NCBI Taxonomy" id="585055"/>
    <lineage>
        <taxon>Bacteria</taxon>
        <taxon>Pseudomonadati</taxon>
        <taxon>Pseudomonadota</taxon>
        <taxon>Gammaproteobacteria</taxon>
        <taxon>Enterobacterales</taxon>
        <taxon>Enterobacteriaceae</taxon>
        <taxon>Escherichia</taxon>
    </lineage>
</organism>
<comment type="catalytic activity">
    <reaction evidence="1">
        <text>2-formamido-N(1)-(5-O-phospho-beta-D-ribosyl)acetamidine + ATP = 5-amino-1-(5-phospho-beta-D-ribosyl)imidazole + ADP + phosphate + H(+)</text>
        <dbReference type="Rhea" id="RHEA:23032"/>
        <dbReference type="ChEBI" id="CHEBI:15378"/>
        <dbReference type="ChEBI" id="CHEBI:30616"/>
        <dbReference type="ChEBI" id="CHEBI:43474"/>
        <dbReference type="ChEBI" id="CHEBI:137981"/>
        <dbReference type="ChEBI" id="CHEBI:147287"/>
        <dbReference type="ChEBI" id="CHEBI:456216"/>
        <dbReference type="EC" id="6.3.3.1"/>
    </reaction>
</comment>
<comment type="pathway">
    <text evidence="1">Purine metabolism; IMP biosynthesis via de novo pathway; 5-amino-1-(5-phospho-D-ribosyl)imidazole from N(2)-formyl-N(1)-(5-phospho-D-ribosyl)glycinamide: step 2/2.</text>
</comment>
<comment type="subcellular location">
    <subcellularLocation>
        <location evidence="1">Cytoplasm</location>
    </subcellularLocation>
</comment>
<comment type="similarity">
    <text evidence="1">Belongs to the AIR synthase family.</text>
</comment>
<feature type="chain" id="PRO_1000148280" description="Phosphoribosylformylglycinamidine cyclo-ligase">
    <location>
        <begin position="1"/>
        <end position="345"/>
    </location>
</feature>
<name>PUR5_ECO55</name>
<protein>
    <recommendedName>
        <fullName evidence="1">Phosphoribosylformylglycinamidine cyclo-ligase</fullName>
        <ecNumber evidence="1">6.3.3.1</ecNumber>
    </recommendedName>
    <alternativeName>
        <fullName evidence="1">AIR synthase</fullName>
    </alternativeName>
    <alternativeName>
        <fullName evidence="1">AIRS</fullName>
    </alternativeName>
    <alternativeName>
        <fullName evidence="1">Phosphoribosyl-aminoimidazole synthetase</fullName>
    </alternativeName>
</protein>
<dbReference type="EC" id="6.3.3.1" evidence="1"/>
<dbReference type="EMBL" id="CU928145">
    <property type="protein sequence ID" value="CAU98657.1"/>
    <property type="molecule type" value="Genomic_DNA"/>
</dbReference>
<dbReference type="RefSeq" id="WP_001295474.1">
    <property type="nucleotide sequence ID" value="NC_011748.1"/>
</dbReference>
<dbReference type="SMR" id="B7LCN9"/>
<dbReference type="GeneID" id="93774637"/>
<dbReference type="KEGG" id="eck:EC55989_2784"/>
<dbReference type="HOGENOM" id="CLU_047116_0_0_6"/>
<dbReference type="UniPathway" id="UPA00074">
    <property type="reaction ID" value="UER00129"/>
</dbReference>
<dbReference type="Proteomes" id="UP000000746">
    <property type="component" value="Chromosome"/>
</dbReference>
<dbReference type="GO" id="GO:0005829">
    <property type="term" value="C:cytosol"/>
    <property type="evidence" value="ECO:0007669"/>
    <property type="project" value="TreeGrafter"/>
</dbReference>
<dbReference type="GO" id="GO:0005524">
    <property type="term" value="F:ATP binding"/>
    <property type="evidence" value="ECO:0007669"/>
    <property type="project" value="UniProtKB-KW"/>
</dbReference>
<dbReference type="GO" id="GO:0004637">
    <property type="term" value="F:phosphoribosylamine-glycine ligase activity"/>
    <property type="evidence" value="ECO:0007669"/>
    <property type="project" value="TreeGrafter"/>
</dbReference>
<dbReference type="GO" id="GO:0004641">
    <property type="term" value="F:phosphoribosylformylglycinamidine cyclo-ligase activity"/>
    <property type="evidence" value="ECO:0007669"/>
    <property type="project" value="UniProtKB-UniRule"/>
</dbReference>
<dbReference type="GO" id="GO:0006189">
    <property type="term" value="P:'de novo' IMP biosynthetic process"/>
    <property type="evidence" value="ECO:0007669"/>
    <property type="project" value="UniProtKB-UniRule"/>
</dbReference>
<dbReference type="GO" id="GO:0046084">
    <property type="term" value="P:adenine biosynthetic process"/>
    <property type="evidence" value="ECO:0007669"/>
    <property type="project" value="TreeGrafter"/>
</dbReference>
<dbReference type="CDD" id="cd02196">
    <property type="entry name" value="PurM"/>
    <property type="match status" value="1"/>
</dbReference>
<dbReference type="FunFam" id="3.30.1330.10:FF:000001">
    <property type="entry name" value="Phosphoribosylformylglycinamidine cyclo-ligase"/>
    <property type="match status" value="1"/>
</dbReference>
<dbReference type="FunFam" id="3.90.650.10:FF:000001">
    <property type="entry name" value="Phosphoribosylformylglycinamidine cyclo-ligase"/>
    <property type="match status" value="1"/>
</dbReference>
<dbReference type="Gene3D" id="3.90.650.10">
    <property type="entry name" value="PurM-like C-terminal domain"/>
    <property type="match status" value="1"/>
</dbReference>
<dbReference type="Gene3D" id="3.30.1330.10">
    <property type="entry name" value="PurM-like, N-terminal domain"/>
    <property type="match status" value="1"/>
</dbReference>
<dbReference type="HAMAP" id="MF_00741">
    <property type="entry name" value="AIRS"/>
    <property type="match status" value="1"/>
</dbReference>
<dbReference type="InterPro" id="IPR010918">
    <property type="entry name" value="PurM-like_C_dom"/>
</dbReference>
<dbReference type="InterPro" id="IPR036676">
    <property type="entry name" value="PurM-like_C_sf"/>
</dbReference>
<dbReference type="InterPro" id="IPR016188">
    <property type="entry name" value="PurM-like_N"/>
</dbReference>
<dbReference type="InterPro" id="IPR036921">
    <property type="entry name" value="PurM-like_N_sf"/>
</dbReference>
<dbReference type="InterPro" id="IPR004733">
    <property type="entry name" value="PurM_cligase"/>
</dbReference>
<dbReference type="NCBIfam" id="TIGR00878">
    <property type="entry name" value="purM"/>
    <property type="match status" value="1"/>
</dbReference>
<dbReference type="PANTHER" id="PTHR10520:SF12">
    <property type="entry name" value="TRIFUNCTIONAL PURINE BIOSYNTHETIC PROTEIN ADENOSINE-3"/>
    <property type="match status" value="1"/>
</dbReference>
<dbReference type="PANTHER" id="PTHR10520">
    <property type="entry name" value="TRIFUNCTIONAL PURINE BIOSYNTHETIC PROTEIN ADENOSINE-3-RELATED"/>
    <property type="match status" value="1"/>
</dbReference>
<dbReference type="Pfam" id="PF00586">
    <property type="entry name" value="AIRS"/>
    <property type="match status" value="1"/>
</dbReference>
<dbReference type="Pfam" id="PF02769">
    <property type="entry name" value="AIRS_C"/>
    <property type="match status" value="1"/>
</dbReference>
<dbReference type="SUPFAM" id="SSF56042">
    <property type="entry name" value="PurM C-terminal domain-like"/>
    <property type="match status" value="1"/>
</dbReference>
<dbReference type="SUPFAM" id="SSF55326">
    <property type="entry name" value="PurM N-terminal domain-like"/>
    <property type="match status" value="1"/>
</dbReference>